<sequence>MASSLLAGERLVRALGPGGELEPERLPRKLRAELEAALGKKHKGGDSSSGPQRLVSFRLIRDLHQHLRERDSKLYLHELLEGSEIYLPEVVKPPRNPELVARLEKIKIQLANEEYKRITRNVTCQDTRHGGTLSDLGKQVRSLKALVITIFNFIVTVVAAFVCTYLGSQYIFTEMASRVLAALIVASVVGLAELYVMVRAMEGELGEL</sequence>
<feature type="initiator methionine" description="Removed" evidence="8 9">
    <location>
        <position position="1"/>
    </location>
</feature>
<feature type="chain" id="PRO_0000079298" description="Vacuolar ATPase assembly protein VMA12">
    <location>
        <begin position="2"/>
        <end position="208"/>
    </location>
</feature>
<feature type="transmembrane region" description="Helical" evidence="2">
    <location>
        <begin position="146"/>
        <end position="166"/>
    </location>
</feature>
<feature type="transmembrane region" description="Helical" evidence="2">
    <location>
        <begin position="179"/>
        <end position="199"/>
    </location>
</feature>
<feature type="modified residue" description="N-acetylalanine" evidence="8 9">
    <location>
        <position position="2"/>
    </location>
</feature>
<feature type="sequence variant" id="VAR_075770" description="In CDG2P; dbSNP:rs369488804." evidence="3">
    <original>A</original>
    <variation>G</variation>
    <location>
        <position position="7"/>
    </location>
</feature>
<feature type="sequence variant" id="VAR_075771" description="In CDG2P; dbSNP:rs869025586." evidence="3">
    <original>A</original>
    <variation>P</variation>
    <location>
        <position position="14"/>
    </location>
</feature>
<feature type="sequence variant" id="VAR_075772" description="In CDG2P; dbSNP:rs782531869." evidence="3">
    <original>R</original>
    <variation>P</variation>
    <location>
        <position position="31"/>
    </location>
</feature>
<feature type="sequence variant" id="VAR_033749" description="In dbSNP:rs12572.">
    <original>V</original>
    <variation>I</variation>
    <location>
        <position position="158"/>
    </location>
</feature>
<feature type="sequence variant" id="VAR_033750" description="In dbSNP:rs36106147.">
    <original>L</original>
    <variation>V</variation>
    <location>
        <position position="166"/>
    </location>
</feature>
<evidence type="ECO:0000250" key="1">
    <source>
        <dbReference type="UniProtKB" id="Q5SYH2"/>
    </source>
</evidence>
<evidence type="ECO:0000255" key="2"/>
<evidence type="ECO:0000269" key="3">
    <source>
    </source>
</evidence>
<evidence type="ECO:0000269" key="4">
    <source>
    </source>
</evidence>
<evidence type="ECO:0000303" key="5">
    <source>
    </source>
</evidence>
<evidence type="ECO:0000305" key="6"/>
<evidence type="ECO:0000312" key="7">
    <source>
        <dbReference type="HGNC" id="HGNC:18085"/>
    </source>
</evidence>
<evidence type="ECO:0007744" key="8">
    <source>
    </source>
</evidence>
<evidence type="ECO:0007744" key="9">
    <source>
    </source>
</evidence>
<organism>
    <name type="scientific">Homo sapiens</name>
    <name type="common">Human</name>
    <dbReference type="NCBI Taxonomy" id="9606"/>
    <lineage>
        <taxon>Eukaryota</taxon>
        <taxon>Metazoa</taxon>
        <taxon>Chordata</taxon>
        <taxon>Craniata</taxon>
        <taxon>Vertebrata</taxon>
        <taxon>Euteleostomi</taxon>
        <taxon>Mammalia</taxon>
        <taxon>Eutheria</taxon>
        <taxon>Euarchontoglires</taxon>
        <taxon>Primates</taxon>
        <taxon>Haplorrhini</taxon>
        <taxon>Catarrhini</taxon>
        <taxon>Hominidae</taxon>
        <taxon>Homo</taxon>
    </lineage>
</organism>
<accession>Q8N511</accession>
<reference key="1">
    <citation type="journal article" date="2002" name="Sheng Wu Hua Xue Yu Sheng Wu Wu Li Jin Zhan">
        <title>In silico cloning of C17orf32, a novel human gene and verification of its coding region by RT-PCR.</title>
        <authorList>
            <person name="Zhang D.L."/>
            <person name="Ding P.G."/>
            <person name="Ling L.J."/>
            <person name="Chen R.-S."/>
            <person name="Ma D.-L."/>
        </authorList>
    </citation>
    <scope>NUCLEOTIDE SEQUENCE [MRNA]</scope>
    <source>
        <tissue>Gastric adenocarcinoma</tissue>
    </source>
</reference>
<reference key="2">
    <citation type="journal article" date="2004" name="Genome Res.">
        <title>The status, quality, and expansion of the NIH full-length cDNA project: the Mammalian Gene Collection (MGC).</title>
        <authorList>
            <consortium name="The MGC Project Team"/>
        </authorList>
    </citation>
    <scope>NUCLEOTIDE SEQUENCE [LARGE SCALE MRNA]</scope>
    <source>
        <tissue>Brain</tissue>
    </source>
</reference>
<reference key="3">
    <citation type="journal article" date="2006" name="Nature">
        <title>DNA sequence of human chromosome 17 and analysis of rearrangement in the human lineage.</title>
        <authorList>
            <person name="Zody M.C."/>
            <person name="Garber M."/>
            <person name="Adams D.J."/>
            <person name="Sharpe T."/>
            <person name="Harrow J."/>
            <person name="Lupski J.R."/>
            <person name="Nicholson C."/>
            <person name="Searle S.M."/>
            <person name="Wilming L."/>
            <person name="Young S.K."/>
            <person name="Abouelleil A."/>
            <person name="Allen N.R."/>
            <person name="Bi W."/>
            <person name="Bloom T."/>
            <person name="Borowsky M.L."/>
            <person name="Bugalter B.E."/>
            <person name="Butler J."/>
            <person name="Chang J.L."/>
            <person name="Chen C.-K."/>
            <person name="Cook A."/>
            <person name="Corum B."/>
            <person name="Cuomo C.A."/>
            <person name="de Jong P.J."/>
            <person name="DeCaprio D."/>
            <person name="Dewar K."/>
            <person name="FitzGerald M."/>
            <person name="Gilbert J."/>
            <person name="Gibson R."/>
            <person name="Gnerre S."/>
            <person name="Goldstein S."/>
            <person name="Grafham D.V."/>
            <person name="Grocock R."/>
            <person name="Hafez N."/>
            <person name="Hagopian D.S."/>
            <person name="Hart E."/>
            <person name="Norman C.H."/>
            <person name="Humphray S."/>
            <person name="Jaffe D.B."/>
            <person name="Jones M."/>
            <person name="Kamal M."/>
            <person name="Khodiyar V.K."/>
            <person name="LaButti K."/>
            <person name="Laird G."/>
            <person name="Lehoczky J."/>
            <person name="Liu X."/>
            <person name="Lokyitsang T."/>
            <person name="Loveland J."/>
            <person name="Lui A."/>
            <person name="Macdonald P."/>
            <person name="Major J.E."/>
            <person name="Matthews L."/>
            <person name="Mauceli E."/>
            <person name="McCarroll S.A."/>
            <person name="Mihalev A.H."/>
            <person name="Mudge J."/>
            <person name="Nguyen C."/>
            <person name="Nicol R."/>
            <person name="O'Leary S.B."/>
            <person name="Osoegawa K."/>
            <person name="Schwartz D.C."/>
            <person name="Shaw-Smith C."/>
            <person name="Stankiewicz P."/>
            <person name="Steward C."/>
            <person name="Swarbreck D."/>
            <person name="Venkataraman V."/>
            <person name="Whittaker C.A."/>
            <person name="Yang X."/>
            <person name="Zimmer A.R."/>
            <person name="Bradley A."/>
            <person name="Hubbard T."/>
            <person name="Birren B.W."/>
            <person name="Rogers J."/>
            <person name="Lander E.S."/>
            <person name="Nusbaum C."/>
        </authorList>
    </citation>
    <scope>NUCLEOTIDE SEQUENCE [LARGE SCALE GENOMIC DNA]</scope>
</reference>
<reference key="4">
    <citation type="journal article" date="2012" name="Mol. Cell. Proteomics">
        <title>Comparative large-scale characterisation of plant vs. mammal proteins reveals similar and idiosyncratic N-alpha acetylation features.</title>
        <authorList>
            <person name="Bienvenut W.V."/>
            <person name="Sumpton D."/>
            <person name="Martinez A."/>
            <person name="Lilla S."/>
            <person name="Espagne C."/>
            <person name="Meinnel T."/>
            <person name="Giglione C."/>
        </authorList>
    </citation>
    <scope>ACETYLATION [LARGE SCALE ANALYSIS] AT ALA-2</scope>
    <scope>CLEAVAGE OF INITIATOR METHIONINE [LARGE SCALE ANALYSIS]</scope>
    <scope>IDENTIFICATION BY MASS SPECTROMETRY [LARGE SCALE ANALYSIS]</scope>
</reference>
<reference key="5">
    <citation type="journal article" date="2012" name="Proc. Natl. Acad. Sci. U.S.A.">
        <title>N-terminal acetylome analyses and functional insights of the N-terminal acetyltransferase NatB.</title>
        <authorList>
            <person name="Van Damme P."/>
            <person name="Lasa M."/>
            <person name="Polevoda B."/>
            <person name="Gazquez C."/>
            <person name="Elosegui-Artola A."/>
            <person name="Kim D.S."/>
            <person name="De Juan-Pardo E."/>
            <person name="Demeyer K."/>
            <person name="Hole K."/>
            <person name="Larrea E."/>
            <person name="Timmerman E."/>
            <person name="Prieto J."/>
            <person name="Arnesen T."/>
            <person name="Sherman F."/>
            <person name="Gevaert K."/>
            <person name="Aldabe R."/>
        </authorList>
    </citation>
    <scope>ACETYLATION [LARGE SCALE ANALYSIS] AT ALA-2</scope>
    <scope>CLEAVAGE OF INITIATOR METHIONINE [LARGE SCALE ANALYSIS]</scope>
    <scope>IDENTIFICATION BY MASS SPECTROMETRY [LARGE SCALE ANALYSIS]</scope>
</reference>
<reference key="6">
    <citation type="journal article" date="2016" name="Am. J. Hum. Genet.">
        <title>TMEM199 deficiency is a disorder of Golgi homeostasis characterized by elevated aminotransferases, alkaline phosphatase, and cholesterol and abnormal glycosylation.</title>
        <authorList>
            <person name="Jansen J.C."/>
            <person name="Timal S."/>
            <person name="van Scherpenzeel M."/>
            <person name="Michelakakis H."/>
            <person name="Vicogne D."/>
            <person name="Ashikov A."/>
            <person name="Moraitou M."/>
            <person name="Hoischen A."/>
            <person name="Huijben K."/>
            <person name="Steenbergen G."/>
            <person name="van den Boogert M.A."/>
            <person name="Porta F."/>
            <person name="Calvo P.L."/>
            <person name="Mavrikou M."/>
            <person name="Cenacchi G."/>
            <person name="van den Bogaart G."/>
            <person name="Salomon J."/>
            <person name="Holleboom A.G."/>
            <person name="Rodenburg R.J."/>
            <person name="Drenth J.P."/>
            <person name="Huynen M.A."/>
            <person name="Wevers R.A."/>
            <person name="Morava E."/>
            <person name="Foulquier F."/>
            <person name="Veltman J.A."/>
            <person name="Lefeber D.J."/>
        </authorList>
    </citation>
    <scope>SUBCELLULAR LOCATION</scope>
    <scope>FUNCTION</scope>
    <scope>VARIANTS CDG2P GLY-7; PRO-14 AND PRO-31</scope>
    <scope>INVOLVEMENT IN CDG2P</scope>
</reference>
<reference key="7">
    <citation type="journal article" date="2017" name="Elife">
        <title>The vacuolar-ATPase complex and assembly factors, TMEM199 and CCDC115, control HIF1alpha prolyl hydroxylation by regulating cellular iron levels.</title>
        <authorList>
            <person name="Miles A.L."/>
            <person name="Burr S.P."/>
            <person name="Grice G.L."/>
            <person name="Nathan J.A."/>
        </authorList>
    </citation>
    <scope>FUNCTION</scope>
    <scope>SUBUNIT</scope>
    <scope>SUBCELLULAR LOCATION</scope>
</reference>
<reference key="8">
    <citation type="journal article" date="2021" name="Nat. Chem. Biol.">
        <title>A proteome-wide map of 20(S)-hydroxycholesterol interactors in cell membranes.</title>
        <authorList>
            <person name="Cheng Y.S."/>
            <person name="Zhang T."/>
            <person name="Ma X."/>
            <person name="Pratuangtham S."/>
            <person name="Zhang G.C."/>
            <person name="Ondrus A.A."/>
            <person name="Mafi A."/>
            <person name="Lomenick B."/>
            <person name="Jones J.J."/>
            <person name="Ondrus A.E."/>
        </authorList>
    </citation>
    <scope>FUNCTION</scope>
</reference>
<proteinExistence type="evidence at protein level"/>
<protein>
    <recommendedName>
        <fullName evidence="6">Vacuolar ATPase assembly protein VMA12</fullName>
    </recommendedName>
    <alternativeName>
        <fullName evidence="5">Transmembrane protein 199</fullName>
    </alternativeName>
</protein>
<comment type="function">
    <text evidence="1 3 4">Accessory component of the proton-transporting vacuolar (V)-ATPase protein pump involved in intracellular iron homeostasis. In aerobic conditions, required for intracellular iron homeostasis, thus triggering the activity of Fe(2+) prolyl hydroxylase (PHD) enzymes, and leading to HIF1A hydroxylation and subsequent proteasomal degradation. Necessary for endolysosomal acidification and lysosomal degradation (PubMed:28296633). May be involved in Golgi homeostasis (PubMed:26833330). Binds 20(S)-hydroxycholesterol (20(S)-OHC) (By similarity).</text>
</comment>
<comment type="subunit">
    <text evidence="4">Accessory component of the multisubunit proton-transporting vacuolar (V)-ATPase protein pump.</text>
</comment>
<comment type="interaction">
    <interactant intactId="EBI-10265825">
        <id>Q8N511</id>
    </interactant>
    <interactant intactId="EBI-13059134">
        <id>Q13520</id>
        <label>AQP6</label>
    </interactant>
    <organismsDiffer>false</organismsDiffer>
    <experiments>3</experiments>
</comment>
<comment type="interaction">
    <interactant intactId="EBI-10265825">
        <id>Q8N511</id>
    </interactant>
    <interactant intactId="EBI-700794">
        <id>Q13323</id>
        <label>BIK</label>
    </interactant>
    <organismsDiffer>false</organismsDiffer>
    <experiments>3</experiments>
</comment>
<comment type="interaction">
    <interactant intactId="EBI-10265825">
        <id>Q8N511</id>
    </interactant>
    <interactant intactId="EBI-10320732">
        <id>Q9UGN4</id>
        <label>CD300A</label>
    </interactant>
    <organismsDiffer>false</organismsDiffer>
    <experiments>3</experiments>
</comment>
<comment type="interaction">
    <interactant intactId="EBI-10265825">
        <id>Q8N511</id>
    </interactant>
    <interactant intactId="EBI-3915253">
        <id>Q15125</id>
        <label>EBP</label>
    </interactant>
    <organismsDiffer>false</organismsDiffer>
    <experiments>3</experiments>
</comment>
<comment type="interaction">
    <interactant intactId="EBI-10265825">
        <id>Q8N511</id>
    </interactant>
    <interactant intactId="EBI-18535450">
        <id>Q9GZR5</id>
        <label>ELOVL4</label>
    </interactant>
    <organismsDiffer>false</organismsDiffer>
    <experiments>3</experiments>
</comment>
<comment type="interaction">
    <interactant intactId="EBI-10265825">
        <id>Q8N511</id>
    </interactant>
    <interactant intactId="EBI-359299">
        <id>O75477</id>
        <label>ERLIN1</label>
    </interactant>
    <organismsDiffer>false</organismsDiffer>
    <experiments>3</experiments>
</comment>
<comment type="interaction">
    <interactant intactId="EBI-10265825">
        <id>Q8N511</id>
    </interactant>
    <interactant intactId="EBI-3905457">
        <id>P38484</id>
        <label>IFNGR2</label>
    </interactant>
    <organismsDiffer>false</organismsDiffer>
    <experiments>3</experiments>
</comment>
<comment type="interaction">
    <interactant intactId="EBI-10265825">
        <id>Q8N511</id>
    </interactant>
    <interactant intactId="EBI-10266796">
        <id>Q8N5M9</id>
        <label>JAGN1</label>
    </interactant>
    <organismsDiffer>false</organismsDiffer>
    <experiments>3</experiments>
</comment>
<comment type="interaction">
    <interactant intactId="EBI-10265825">
        <id>Q8N511</id>
    </interactant>
    <interactant intactId="EBI-749265">
        <id>Q8N6L0</id>
        <label>KASH5</label>
    </interactant>
    <organismsDiffer>false</organismsDiffer>
    <experiments>3</experiments>
</comment>
<comment type="interaction">
    <interactant intactId="EBI-10265825">
        <id>Q8N511</id>
    </interactant>
    <interactant intactId="EBI-7545592">
        <id>Q9H6H4</id>
        <label>REEP4</label>
    </interactant>
    <organismsDiffer>false</organismsDiffer>
    <experiments>3</experiments>
</comment>
<comment type="interaction">
    <interactant intactId="EBI-10265825">
        <id>Q8N511</id>
    </interactant>
    <interactant intactId="EBI-17456472">
        <id>Q96EP9</id>
        <label>SLC10A4</label>
    </interactant>
    <organismsDiffer>false</organismsDiffer>
    <experiments>3</experiments>
</comment>
<comment type="interaction">
    <interactant intactId="EBI-10265825">
        <id>Q8N511</id>
    </interactant>
    <interactant intactId="EBI-712466">
        <id>Q16623</id>
        <label>STX1A</label>
    </interactant>
    <organismsDiffer>false</organismsDiffer>
    <experiments>3</experiments>
</comment>
<comment type="interaction">
    <interactant intactId="EBI-10265825">
        <id>Q8N511</id>
    </interactant>
    <interactant intactId="EBI-744942">
        <id>Q12846</id>
        <label>STX4</label>
    </interactant>
    <organismsDiffer>false</organismsDiffer>
    <experiments>3</experiments>
</comment>
<comment type="interaction">
    <interactant intactId="EBI-10265825">
        <id>Q8N511</id>
    </interactant>
    <interactant intactId="EBI-6268651">
        <id>Q9NPL8</id>
        <label>TIMMDC1</label>
    </interactant>
    <organismsDiffer>false</organismsDiffer>
    <experiments>3</experiments>
</comment>
<comment type="interaction">
    <interactant intactId="EBI-10265825">
        <id>Q8N511</id>
    </interactant>
    <interactant intactId="EBI-8638294">
        <id>Q9NUH8</id>
        <label>TMEM14B</label>
    </interactant>
    <organismsDiffer>false</organismsDiffer>
    <experiments>3</experiments>
</comment>
<comment type="subcellular location">
    <subcellularLocation>
        <location evidence="3">Cytoplasmic vesicle</location>
        <location evidence="3">COPI-coated vesicle membrane</location>
        <topology evidence="2">Multi-pass membrane protein</topology>
    </subcellularLocation>
    <subcellularLocation>
        <location evidence="3">Endoplasmic reticulum-Golgi intermediate compartment membrane</location>
        <topology evidence="2">Multi-pass membrane protein</topology>
    </subcellularLocation>
    <subcellularLocation>
        <location evidence="4">Endoplasmic reticulum membrane</location>
        <topology evidence="2">Multi-pass membrane protein</topology>
    </subcellularLocation>
    <text evidence="3">Partial colocalization with GOLGB1.</text>
</comment>
<comment type="disease" evidence="3">
    <disease id="DI-04627">
        <name>Congenital disorder of glycosylation 2P</name>
        <acronym>CDG2P</acronym>
        <description>A form of congenital disorder of glycosylation, a genetically heterogeneous group of autosomal recessive, multisystem disorders caused by a defect in glycoprotein biosynthesis and characterized by under-glycosylated serum glycoproteins. Congenital disorders of glycosylation result in a wide variety of clinical features, such as defects in the nervous system development, psychomotor retardation, dysmorphic features, hypotonia, coagulation disorders, and immunodeficiency. The broad spectrum of features reflects the critical role of N-glycoproteins during embryonic development, differentiation, and maintenance of cell functions. CDG2P is characterized by mild metabolic dysfunction, primarily affecting the liver. Psychomotor development is normal.</description>
        <dbReference type="MIM" id="616829"/>
    </disease>
    <text>The disease is caused by variants affecting the gene represented in this entry.</text>
</comment>
<gene>
    <name evidence="7" type="primary">VMA12</name>
    <name evidence="7" type="synonym">C17orf32</name>
    <name evidence="5" type="synonym">TMEM199</name>
</gene>
<name>VMA12_HUMAN</name>
<dbReference type="EMBL" id="AY074907">
    <property type="protein sequence ID" value="AAO12163.1"/>
    <property type="molecule type" value="mRNA"/>
</dbReference>
<dbReference type="EMBL" id="AC002094">
    <property type="status" value="NOT_ANNOTATED_CDS"/>
    <property type="molecule type" value="Genomic_DNA"/>
</dbReference>
<dbReference type="EMBL" id="KF573651">
    <property type="status" value="NOT_ANNOTATED_CDS"/>
    <property type="molecule type" value="Genomic_DNA"/>
</dbReference>
<dbReference type="EMBL" id="BC033113">
    <property type="protein sequence ID" value="AAH33113.1"/>
    <property type="molecule type" value="mRNA"/>
</dbReference>
<dbReference type="CCDS" id="CCDS11228.1"/>
<dbReference type="RefSeq" id="NP_689677.1">
    <property type="nucleotide sequence ID" value="NM_152464.3"/>
</dbReference>
<dbReference type="BioGRID" id="127028">
    <property type="interactions" value="159"/>
</dbReference>
<dbReference type="FunCoup" id="Q8N511">
    <property type="interactions" value="2468"/>
</dbReference>
<dbReference type="IntAct" id="Q8N511">
    <property type="interactions" value="61"/>
</dbReference>
<dbReference type="MINT" id="Q8N511"/>
<dbReference type="STRING" id="9606.ENSP00000292114"/>
<dbReference type="TCDB" id="9.B.206.1.1">
    <property type="family name" value="the tmem199 (tmem199) family"/>
</dbReference>
<dbReference type="iPTMnet" id="Q8N511"/>
<dbReference type="PhosphoSitePlus" id="Q8N511"/>
<dbReference type="BioMuta" id="TMEM199"/>
<dbReference type="DMDM" id="51701337"/>
<dbReference type="jPOST" id="Q8N511"/>
<dbReference type="MassIVE" id="Q8N511"/>
<dbReference type="PaxDb" id="9606-ENSP00000292114"/>
<dbReference type="PeptideAtlas" id="Q8N511"/>
<dbReference type="ProteomicsDB" id="71994"/>
<dbReference type="Pumba" id="Q8N511"/>
<dbReference type="Antibodypedia" id="34886">
    <property type="antibodies" value="39 antibodies from 20 providers"/>
</dbReference>
<dbReference type="DNASU" id="147007"/>
<dbReference type="Ensembl" id="ENST00000292114.8">
    <property type="protein sequence ID" value="ENSP00000292114.3"/>
    <property type="gene ID" value="ENSG00000244045.13"/>
</dbReference>
<dbReference type="GeneID" id="147007"/>
<dbReference type="KEGG" id="hsa:147007"/>
<dbReference type="MANE-Select" id="ENST00000292114.8">
    <property type="protein sequence ID" value="ENSP00000292114.3"/>
    <property type="RefSeq nucleotide sequence ID" value="NM_152464.3"/>
    <property type="RefSeq protein sequence ID" value="NP_689677.1"/>
</dbReference>
<dbReference type="UCSC" id="uc002hba.4">
    <property type="organism name" value="human"/>
</dbReference>
<dbReference type="AGR" id="HGNC:18085"/>
<dbReference type="CTD" id="147007"/>
<dbReference type="DisGeNET" id="147007"/>
<dbReference type="GeneCards" id="TMEM199"/>
<dbReference type="HGNC" id="HGNC:18085">
    <property type="gene designation" value="VMA12"/>
</dbReference>
<dbReference type="HPA" id="ENSG00000244045">
    <property type="expression patterns" value="Low tissue specificity"/>
</dbReference>
<dbReference type="MalaCards" id="TMEM199"/>
<dbReference type="MIM" id="616815">
    <property type="type" value="gene"/>
</dbReference>
<dbReference type="MIM" id="616829">
    <property type="type" value="phenotype"/>
</dbReference>
<dbReference type="neXtProt" id="NX_Q8N511"/>
<dbReference type="OpenTargets" id="ENSG00000244045"/>
<dbReference type="Orphanet" id="466703">
    <property type="disease" value="TMEM199-CDG"/>
</dbReference>
<dbReference type="PharmGKB" id="PA162406348"/>
<dbReference type="VEuPathDB" id="HostDB:ENSG00000244045"/>
<dbReference type="eggNOG" id="ENOG502RXKD">
    <property type="taxonomic scope" value="Eukaryota"/>
</dbReference>
<dbReference type="GeneTree" id="ENSGT00390000014591"/>
<dbReference type="HOGENOM" id="CLU_114590_0_0_1"/>
<dbReference type="InParanoid" id="Q8N511"/>
<dbReference type="OMA" id="RMTRNVN"/>
<dbReference type="OrthoDB" id="19981at2759"/>
<dbReference type="PAN-GO" id="Q8N511">
    <property type="GO annotations" value="1 GO annotation based on evolutionary models"/>
</dbReference>
<dbReference type="PhylomeDB" id="Q8N511"/>
<dbReference type="TreeFam" id="TF314610"/>
<dbReference type="PathwayCommons" id="Q8N511"/>
<dbReference type="SignaLink" id="Q8N511"/>
<dbReference type="BioGRID-ORCS" id="147007">
    <property type="hits" value="516 hits in 1186 CRISPR screens"/>
</dbReference>
<dbReference type="ChiTaRS" id="TMEM199">
    <property type="organism name" value="human"/>
</dbReference>
<dbReference type="GenomeRNAi" id="147007"/>
<dbReference type="Pharos" id="Q8N511">
    <property type="development level" value="Tbio"/>
</dbReference>
<dbReference type="PRO" id="PR:Q8N511"/>
<dbReference type="Proteomes" id="UP000005640">
    <property type="component" value="Chromosome 17"/>
</dbReference>
<dbReference type="RNAct" id="Q8N511">
    <property type="molecule type" value="protein"/>
</dbReference>
<dbReference type="Bgee" id="ENSG00000244045">
    <property type="expression patterns" value="Expressed in monocyte and 128 other cell types or tissues"/>
</dbReference>
<dbReference type="ExpressionAtlas" id="Q8N511">
    <property type="expression patterns" value="baseline and differential"/>
</dbReference>
<dbReference type="GO" id="GO:0030663">
    <property type="term" value="C:COPI-coated vesicle membrane"/>
    <property type="evidence" value="ECO:0000314"/>
    <property type="project" value="UniProtKB"/>
</dbReference>
<dbReference type="GO" id="GO:0012505">
    <property type="term" value="C:endomembrane system"/>
    <property type="evidence" value="ECO:0000318"/>
    <property type="project" value="GO_Central"/>
</dbReference>
<dbReference type="GO" id="GO:0005783">
    <property type="term" value="C:endoplasmic reticulum"/>
    <property type="evidence" value="ECO:0000314"/>
    <property type="project" value="UniProtKB"/>
</dbReference>
<dbReference type="GO" id="GO:0005789">
    <property type="term" value="C:endoplasmic reticulum membrane"/>
    <property type="evidence" value="ECO:0007669"/>
    <property type="project" value="UniProtKB-SubCell"/>
</dbReference>
<dbReference type="GO" id="GO:0033116">
    <property type="term" value="C:endoplasmic reticulum-Golgi intermediate compartment membrane"/>
    <property type="evidence" value="ECO:0000314"/>
    <property type="project" value="UniProtKB"/>
</dbReference>
<dbReference type="GO" id="GO:0005764">
    <property type="term" value="C:lysosome"/>
    <property type="evidence" value="ECO:0007669"/>
    <property type="project" value="GOC"/>
</dbReference>
<dbReference type="GO" id="GO:0016471">
    <property type="term" value="C:vacuolar proton-transporting V-type ATPase complex"/>
    <property type="evidence" value="ECO:0000314"/>
    <property type="project" value="UniProtKB"/>
</dbReference>
<dbReference type="GO" id="GO:0008142">
    <property type="term" value="F:oxysterol binding"/>
    <property type="evidence" value="ECO:0000250"/>
    <property type="project" value="UniProtKB"/>
</dbReference>
<dbReference type="GO" id="GO:0036295">
    <property type="term" value="P:cellular response to increased oxygen levels"/>
    <property type="evidence" value="ECO:0000315"/>
    <property type="project" value="UniProtKB"/>
</dbReference>
<dbReference type="GO" id="GO:0006879">
    <property type="term" value="P:intracellular iron ion homeostasis"/>
    <property type="evidence" value="ECO:0000315"/>
    <property type="project" value="UniProtKB"/>
</dbReference>
<dbReference type="GO" id="GO:0007042">
    <property type="term" value="P:lysosomal lumen acidification"/>
    <property type="evidence" value="ECO:0000315"/>
    <property type="project" value="UniProtKB"/>
</dbReference>
<dbReference type="GO" id="GO:1905146">
    <property type="term" value="P:lysosomal protein catabolic process"/>
    <property type="evidence" value="ECO:0000315"/>
    <property type="project" value="UniProtKB"/>
</dbReference>
<dbReference type="GO" id="GO:0070072">
    <property type="term" value="P:vacuolar proton-transporting V-type ATPase complex assembly"/>
    <property type="evidence" value="ECO:0007669"/>
    <property type="project" value="InterPro"/>
</dbReference>
<dbReference type="InterPro" id="IPR021013">
    <property type="entry name" value="ATPase_Vma12"/>
</dbReference>
<dbReference type="PANTHER" id="PTHR31394">
    <property type="entry name" value="TRANSMEMBRANE PROTEIN 199"/>
    <property type="match status" value="1"/>
</dbReference>
<dbReference type="PANTHER" id="PTHR31394:SF1">
    <property type="entry name" value="TRANSMEMBRANE PROTEIN 199"/>
    <property type="match status" value="1"/>
</dbReference>
<dbReference type="Pfam" id="PF11712">
    <property type="entry name" value="Vma12"/>
    <property type="match status" value="1"/>
</dbReference>
<keyword id="KW-0007">Acetylation</keyword>
<keyword id="KW-0900">Congenital disorder of glycosylation</keyword>
<keyword id="KW-0968">Cytoplasmic vesicle</keyword>
<keyword id="KW-0225">Disease variant</keyword>
<keyword id="KW-0256">Endoplasmic reticulum</keyword>
<keyword id="KW-0472">Membrane</keyword>
<keyword id="KW-1267">Proteomics identification</keyword>
<keyword id="KW-1185">Reference proteome</keyword>
<keyword id="KW-0812">Transmembrane</keyword>
<keyword id="KW-1133">Transmembrane helix</keyword>